<protein>
    <recommendedName>
        <fullName evidence="1">Acyl carrier protein</fullName>
        <shortName evidence="1">ACP</shortName>
    </recommendedName>
</protein>
<name>ACP_LEPIN</name>
<comment type="function">
    <text evidence="1">Carrier of the growing fatty acid chain in fatty acid biosynthesis.</text>
</comment>
<comment type="pathway">
    <text evidence="1">Lipid metabolism; fatty acid biosynthesis.</text>
</comment>
<comment type="subcellular location">
    <subcellularLocation>
        <location evidence="1">Cytoplasm</location>
    </subcellularLocation>
</comment>
<comment type="PTM">
    <text evidence="1">4'-phosphopantetheine is transferred from CoA to a specific serine of apo-ACP by AcpS. This modification is essential for activity because fatty acids are bound in thioester linkage to the sulfhydryl of the prosthetic group.</text>
</comment>
<comment type="similarity">
    <text evidence="1">Belongs to the acyl carrier protein (ACP) family.</text>
</comment>
<dbReference type="EMBL" id="AE010301">
    <property type="protein sequence ID" value="AAN51642.1"/>
    <property type="molecule type" value="Genomic_DNA"/>
</dbReference>
<dbReference type="RefSeq" id="NP_714627.1">
    <property type="nucleotide sequence ID" value="NC_004343.2"/>
</dbReference>
<dbReference type="RefSeq" id="WP_000753030.1">
    <property type="nucleotide sequence ID" value="NC_004343.2"/>
</dbReference>
<dbReference type="SMR" id="Q8EXX4"/>
<dbReference type="FunCoup" id="Q8EXX4">
    <property type="interactions" value="489"/>
</dbReference>
<dbReference type="STRING" id="189518.LB_083"/>
<dbReference type="PaxDb" id="189518-LB_083"/>
<dbReference type="EnsemblBacteria" id="AAN51642">
    <property type="protein sequence ID" value="AAN51642"/>
    <property type="gene ID" value="LB_083"/>
</dbReference>
<dbReference type="GeneID" id="61173552"/>
<dbReference type="KEGG" id="lil:LB_083"/>
<dbReference type="PATRIC" id="fig|189518.3.peg.4411"/>
<dbReference type="HOGENOM" id="CLU_108696_5_1_12"/>
<dbReference type="InParanoid" id="Q8EXX4"/>
<dbReference type="OrthoDB" id="9804551at2"/>
<dbReference type="UniPathway" id="UPA00094"/>
<dbReference type="PRO" id="PR:Q8EXX4"/>
<dbReference type="Proteomes" id="UP000001408">
    <property type="component" value="Chromosome II"/>
</dbReference>
<dbReference type="GO" id="GO:0005829">
    <property type="term" value="C:cytosol"/>
    <property type="evidence" value="ECO:0000318"/>
    <property type="project" value="GO_Central"/>
</dbReference>
<dbReference type="GO" id="GO:0016020">
    <property type="term" value="C:membrane"/>
    <property type="evidence" value="ECO:0007669"/>
    <property type="project" value="GOC"/>
</dbReference>
<dbReference type="GO" id="GO:0000035">
    <property type="term" value="F:acyl binding"/>
    <property type="evidence" value="ECO:0000318"/>
    <property type="project" value="GO_Central"/>
</dbReference>
<dbReference type="GO" id="GO:0000036">
    <property type="term" value="F:acyl carrier activity"/>
    <property type="evidence" value="ECO:0000318"/>
    <property type="project" value="GO_Central"/>
</dbReference>
<dbReference type="GO" id="GO:0009245">
    <property type="term" value="P:lipid A biosynthetic process"/>
    <property type="evidence" value="ECO:0000318"/>
    <property type="project" value="GO_Central"/>
</dbReference>
<dbReference type="FunFam" id="1.10.1200.10:FF:000001">
    <property type="entry name" value="Acyl carrier protein"/>
    <property type="match status" value="1"/>
</dbReference>
<dbReference type="Gene3D" id="1.10.1200.10">
    <property type="entry name" value="ACP-like"/>
    <property type="match status" value="1"/>
</dbReference>
<dbReference type="HAMAP" id="MF_01217">
    <property type="entry name" value="Acyl_carrier"/>
    <property type="match status" value="1"/>
</dbReference>
<dbReference type="InterPro" id="IPR003231">
    <property type="entry name" value="ACP"/>
</dbReference>
<dbReference type="InterPro" id="IPR036736">
    <property type="entry name" value="ACP-like_sf"/>
</dbReference>
<dbReference type="InterPro" id="IPR009081">
    <property type="entry name" value="PP-bd_ACP"/>
</dbReference>
<dbReference type="InterPro" id="IPR006162">
    <property type="entry name" value="Ppantetheine_attach_site"/>
</dbReference>
<dbReference type="NCBIfam" id="TIGR00517">
    <property type="entry name" value="acyl_carrier"/>
    <property type="match status" value="1"/>
</dbReference>
<dbReference type="NCBIfam" id="NF002148">
    <property type="entry name" value="PRK00982.1-2"/>
    <property type="match status" value="1"/>
</dbReference>
<dbReference type="NCBIfam" id="NF002149">
    <property type="entry name" value="PRK00982.1-3"/>
    <property type="match status" value="1"/>
</dbReference>
<dbReference type="NCBIfam" id="NF002150">
    <property type="entry name" value="PRK00982.1-4"/>
    <property type="match status" value="1"/>
</dbReference>
<dbReference type="NCBIfam" id="NF002151">
    <property type="entry name" value="PRK00982.1-5"/>
    <property type="match status" value="1"/>
</dbReference>
<dbReference type="PANTHER" id="PTHR20863">
    <property type="entry name" value="ACYL CARRIER PROTEIN"/>
    <property type="match status" value="1"/>
</dbReference>
<dbReference type="PANTHER" id="PTHR20863:SF76">
    <property type="entry name" value="CARRIER DOMAIN-CONTAINING PROTEIN"/>
    <property type="match status" value="1"/>
</dbReference>
<dbReference type="Pfam" id="PF00550">
    <property type="entry name" value="PP-binding"/>
    <property type="match status" value="1"/>
</dbReference>
<dbReference type="SUPFAM" id="SSF47336">
    <property type="entry name" value="ACP-like"/>
    <property type="match status" value="1"/>
</dbReference>
<dbReference type="PROSITE" id="PS50075">
    <property type="entry name" value="CARRIER"/>
    <property type="match status" value="1"/>
</dbReference>
<dbReference type="PROSITE" id="PS00012">
    <property type="entry name" value="PHOSPHOPANTETHEINE"/>
    <property type="match status" value="1"/>
</dbReference>
<keyword id="KW-0963">Cytoplasm</keyword>
<keyword id="KW-0275">Fatty acid biosynthesis</keyword>
<keyword id="KW-0276">Fatty acid metabolism</keyword>
<keyword id="KW-0444">Lipid biosynthesis</keyword>
<keyword id="KW-0443">Lipid metabolism</keyword>
<keyword id="KW-0596">Phosphopantetheine</keyword>
<keyword id="KW-0597">Phosphoprotein</keyword>
<keyword id="KW-1185">Reference proteome</keyword>
<organism>
    <name type="scientific">Leptospira interrogans serogroup Icterohaemorrhagiae serovar Lai (strain 56601)</name>
    <dbReference type="NCBI Taxonomy" id="189518"/>
    <lineage>
        <taxon>Bacteria</taxon>
        <taxon>Pseudomonadati</taxon>
        <taxon>Spirochaetota</taxon>
        <taxon>Spirochaetia</taxon>
        <taxon>Leptospirales</taxon>
        <taxon>Leptospiraceae</taxon>
        <taxon>Leptospira</taxon>
    </lineage>
</organism>
<reference key="1">
    <citation type="journal article" date="2003" name="Nature">
        <title>Unique physiological and pathogenic features of Leptospira interrogans revealed by whole-genome sequencing.</title>
        <authorList>
            <person name="Ren S.-X."/>
            <person name="Fu G."/>
            <person name="Jiang X.-G."/>
            <person name="Zeng R."/>
            <person name="Miao Y.-G."/>
            <person name="Xu H."/>
            <person name="Zhang Y.-X."/>
            <person name="Xiong H."/>
            <person name="Lu G."/>
            <person name="Lu L.-F."/>
            <person name="Jiang H.-Q."/>
            <person name="Jia J."/>
            <person name="Tu Y.-F."/>
            <person name="Jiang J.-X."/>
            <person name="Gu W.-Y."/>
            <person name="Zhang Y.-Q."/>
            <person name="Cai Z."/>
            <person name="Sheng H.-H."/>
            <person name="Yin H.-F."/>
            <person name="Zhang Y."/>
            <person name="Zhu G.-F."/>
            <person name="Wan M."/>
            <person name="Huang H.-L."/>
            <person name="Qian Z."/>
            <person name="Wang S.-Y."/>
            <person name="Ma W."/>
            <person name="Yao Z.-J."/>
            <person name="Shen Y."/>
            <person name="Qiang B.-Q."/>
            <person name="Xia Q.-C."/>
            <person name="Guo X.-K."/>
            <person name="Danchin A."/>
            <person name="Saint Girons I."/>
            <person name="Somerville R.L."/>
            <person name="Wen Y.-M."/>
            <person name="Shi M.-H."/>
            <person name="Chen Z."/>
            <person name="Xu J.-G."/>
            <person name="Zhao G.-P."/>
        </authorList>
    </citation>
    <scope>NUCLEOTIDE SEQUENCE [LARGE SCALE GENOMIC DNA]</scope>
    <source>
        <strain>56601</strain>
    </source>
</reference>
<proteinExistence type="inferred from homology"/>
<sequence length="77" mass="8502">MADFEKVKSIIVEQLGVDESEVTPEAHFIDDLGADSLDTVELVMALEEEFGIEISDEDAEKIQTVGDVTKFIDNLKS</sequence>
<gene>
    <name evidence="1" type="primary">acpP</name>
    <name type="ordered locus">LB_083</name>
</gene>
<evidence type="ECO:0000255" key="1">
    <source>
        <dbReference type="HAMAP-Rule" id="MF_01217"/>
    </source>
</evidence>
<evidence type="ECO:0000255" key="2">
    <source>
        <dbReference type="PROSITE-ProRule" id="PRU00258"/>
    </source>
</evidence>
<feature type="chain" id="PRO_0000180148" description="Acyl carrier protein">
    <location>
        <begin position="1"/>
        <end position="77"/>
    </location>
</feature>
<feature type="domain" description="Carrier" evidence="2">
    <location>
        <begin position="1"/>
        <end position="76"/>
    </location>
</feature>
<feature type="modified residue" description="O-(pantetheine 4'-phosphoryl)serine" evidence="2">
    <location>
        <position position="36"/>
    </location>
</feature>
<accession>Q8EXX4</accession>